<protein>
    <recommendedName>
        <fullName>Spindle pole component 29</fullName>
    </recommendedName>
</protein>
<accession>E7KVI3</accession>
<gene>
    <name type="primary">SPC29</name>
    <name type="synonym">LPH3</name>
    <name type="synonym">NIP29</name>
    <name type="ORF">QA23_4843</name>
</gene>
<keyword id="KW-0963">Cytoplasm</keyword>
<keyword id="KW-0206">Cytoskeleton</keyword>
<keyword id="KW-0539">Nucleus</keyword>
<keyword id="KW-0597">Phosphoprotein</keyword>
<dbReference type="EMBL" id="ADVV01000082">
    <property type="protein sequence ID" value="EGA80463.1"/>
    <property type="molecule type" value="Genomic_DNA"/>
</dbReference>
<dbReference type="SMR" id="E7KVI3"/>
<dbReference type="HOGENOM" id="CLU_1099229_0_0_1"/>
<dbReference type="GO" id="GO:0005823">
    <property type="term" value="C:central plaque of spindle pole body"/>
    <property type="evidence" value="ECO:0007669"/>
    <property type="project" value="InterPro"/>
</dbReference>
<dbReference type="GO" id="GO:0005737">
    <property type="term" value="C:cytoplasm"/>
    <property type="evidence" value="ECO:0007669"/>
    <property type="project" value="UniProtKB-KW"/>
</dbReference>
<dbReference type="GO" id="GO:0005634">
    <property type="term" value="C:nucleus"/>
    <property type="evidence" value="ECO:0007669"/>
    <property type="project" value="UniProtKB-SubCell"/>
</dbReference>
<dbReference type="GO" id="GO:0005200">
    <property type="term" value="F:structural constituent of cytoskeleton"/>
    <property type="evidence" value="ECO:0007669"/>
    <property type="project" value="InterPro"/>
</dbReference>
<dbReference type="GO" id="GO:0030474">
    <property type="term" value="P:spindle pole body duplication"/>
    <property type="evidence" value="ECO:0007669"/>
    <property type="project" value="InterPro"/>
</dbReference>
<dbReference type="InterPro" id="IPR031392">
    <property type="entry name" value="Spc29"/>
</dbReference>
<dbReference type="Pfam" id="PF17082">
    <property type="entry name" value="Spc29"/>
    <property type="match status" value="1"/>
</dbReference>
<proteinExistence type="inferred from homology"/>
<evidence type="ECO:0000250" key="1"/>
<evidence type="ECO:0000250" key="2">
    <source>
        <dbReference type="UniProtKB" id="P33419"/>
    </source>
</evidence>
<evidence type="ECO:0000256" key="3">
    <source>
        <dbReference type="SAM" id="MobiDB-lite"/>
    </source>
</evidence>
<evidence type="ECO:0000305" key="4"/>
<organism>
    <name type="scientific">Saccharomyces cerevisiae (strain Lalvin QA23)</name>
    <name type="common">Baker's yeast</name>
    <dbReference type="NCBI Taxonomy" id="764098"/>
    <lineage>
        <taxon>Eukaryota</taxon>
        <taxon>Fungi</taxon>
        <taxon>Dikarya</taxon>
        <taxon>Ascomycota</taxon>
        <taxon>Saccharomycotina</taxon>
        <taxon>Saccharomycetes</taxon>
        <taxon>Saccharomycetales</taxon>
        <taxon>Saccharomycetaceae</taxon>
        <taxon>Saccharomyces</taxon>
    </lineage>
</organism>
<name>SPC29_YEASL</name>
<feature type="chain" id="PRO_0000409195" description="Spindle pole component 29">
    <location>
        <begin position="1"/>
        <end position="253"/>
    </location>
</feature>
<feature type="region of interest" description="Disordered" evidence="3">
    <location>
        <begin position="1"/>
        <end position="20"/>
    </location>
</feature>
<feature type="region of interest" description="Disordered" evidence="3">
    <location>
        <begin position="31"/>
        <end position="123"/>
    </location>
</feature>
<feature type="region of interest" description="Disordered" evidence="3">
    <location>
        <begin position="210"/>
        <end position="231"/>
    </location>
</feature>
<feature type="compositionally biased region" description="Polar residues" evidence="3">
    <location>
        <begin position="1"/>
        <end position="12"/>
    </location>
</feature>
<feature type="compositionally biased region" description="Basic and acidic residues" evidence="3">
    <location>
        <begin position="69"/>
        <end position="91"/>
    </location>
</feature>
<feature type="compositionally biased region" description="Basic and acidic residues" evidence="3">
    <location>
        <begin position="211"/>
        <end position="231"/>
    </location>
</feature>
<feature type="modified residue" description="Phosphothreonine" evidence="2">
    <location>
        <position position="18"/>
    </location>
</feature>
<feature type="modified residue" description="Phosphoserine" evidence="2">
    <location>
        <position position="65"/>
    </location>
</feature>
<feature type="modified residue" description="Phosphothreonine; by MPS1" evidence="2">
    <location>
        <position position="240"/>
    </location>
</feature>
<sequence length="253" mass="29280">MDYSNFGNSASKKFQDDTLNRVRKEHEEALKKLREENFSSNTSELGNKKHYRAQERMSSPLHRLSPTGKSDDRKVKSPLDDKLRRQLREGNTRLPPPPFSSYGMPPTNRSNLDRIRRRTSSPVRTDKFASQNVIDDQRLEIKYLERIVYDQGTVIDNLTSRITRLESFILNSISDRGDKNFASLEHSRSFSGFPTNKTYGLQMGGLYENDMPYRRSSDNINKEGAREDRSSQIHIENESTEDILKILSSSFHN</sequence>
<comment type="function">
    <text evidence="1">Component of the spindle pole body (SPB) required for the proper execution of spindle pole body (SPB) duplication. Links the central plaque component SPC42 to the inner plaque component SPC110 (By similarity).</text>
</comment>
<comment type="subunit">
    <text evidence="1">Component of the SPC110 complex containing at least CMD1, SPC29, SPC42 and SCP110. Interacts with BBP1.</text>
</comment>
<comment type="subcellular location">
    <subcellularLocation>
        <location evidence="1">Nucleus</location>
    </subcellularLocation>
    <subcellularLocation>
        <location evidence="1">Cytoplasm</location>
        <location evidence="1">Cytoskeleton</location>
        <location evidence="1">Microtubule organizing center</location>
        <location evidence="1">Spindle pole body</location>
    </subcellularLocation>
</comment>
<comment type="PTM">
    <text evidence="1">MPS1-mediated phosphorylation at Thr-240 is required for spindle pole body duplication.</text>
</comment>
<comment type="similarity">
    <text evidence="4">Belongs to the SPC29 family.</text>
</comment>
<reference key="1">
    <citation type="journal article" date="2011" name="PLoS Genet.">
        <title>Whole-genome comparison reveals novel genetic elements that characterize the genome of industrial strains of Saccharomyces cerevisiae.</title>
        <authorList>
            <person name="Borneman A.R."/>
            <person name="Desany B.A."/>
            <person name="Riches D."/>
            <person name="Affourtit J.P."/>
            <person name="Forgan A.H."/>
            <person name="Pretorius I.S."/>
            <person name="Egholm M."/>
            <person name="Chambers P.J."/>
        </authorList>
    </citation>
    <scope>NUCLEOTIDE SEQUENCE [LARGE SCALE GENOMIC DNA]</scope>
    <source>
        <strain>Lalvin QA23</strain>
    </source>
</reference>